<comment type="function">
    <text evidence="2 5">Acts as a negative regulator of the Wnt signaling pathway via its interaction with DVL1 (PubMed:11113207). Binds preferentially to DNA containing cytidine-phosphate-guanosine (CpG) dinucleotides over CpH (H=A, T, and C), hemimethylated-CpG and hemimethylated-hydroxymethyl-CpG (By similarity).</text>
</comment>
<comment type="subunit">
    <text evidence="1">Interacts with the PDZ domain of DVL1.</text>
</comment>
<comment type="subcellular location">
    <subcellularLocation>
        <location evidence="1">Cytoplasm</location>
    </subcellularLocation>
</comment>
<comment type="developmental stage">
    <text evidence="5">Highest expression at embryonic day 11.</text>
</comment>
<comment type="domain">
    <text evidence="2">The CXXC zinc finger mediates binding to CpG-DNA.</text>
</comment>
<feature type="chain" id="PRO_0000317543" description="CXXC-type zinc finger protein 4">
    <location>
        <begin position="1"/>
        <end position="198"/>
    </location>
</feature>
<feature type="zinc finger region" description="CXXC-type" evidence="3">
    <location>
        <begin position="132"/>
        <end position="173"/>
    </location>
</feature>
<feature type="region of interest" description="Disordered" evidence="4">
    <location>
        <begin position="114"/>
        <end position="134"/>
    </location>
</feature>
<feature type="region of interest" description="Interaction with DVL1" evidence="1">
    <location>
        <begin position="161"/>
        <end position="166"/>
    </location>
</feature>
<feature type="binding site" evidence="3">
    <location>
        <position position="139"/>
    </location>
    <ligand>
        <name>Zn(2+)</name>
        <dbReference type="ChEBI" id="CHEBI:29105"/>
        <label>1</label>
    </ligand>
</feature>
<feature type="binding site" evidence="3">
    <location>
        <position position="142"/>
    </location>
    <ligand>
        <name>Zn(2+)</name>
        <dbReference type="ChEBI" id="CHEBI:29105"/>
        <label>1</label>
    </ligand>
</feature>
<feature type="binding site" evidence="3">
    <location>
        <position position="145"/>
    </location>
    <ligand>
        <name>Zn(2+)</name>
        <dbReference type="ChEBI" id="CHEBI:29105"/>
        <label>1</label>
    </ligand>
</feature>
<feature type="binding site" evidence="3">
    <location>
        <position position="151"/>
    </location>
    <ligand>
        <name>Zn(2+)</name>
        <dbReference type="ChEBI" id="CHEBI:29105"/>
        <label>2</label>
    </ligand>
</feature>
<feature type="binding site" evidence="3">
    <location>
        <position position="154"/>
    </location>
    <ligand>
        <name>Zn(2+)</name>
        <dbReference type="ChEBI" id="CHEBI:29105"/>
        <label>2</label>
    </ligand>
</feature>
<feature type="binding site" evidence="3">
    <location>
        <position position="157"/>
    </location>
    <ligand>
        <name>Zn(2+)</name>
        <dbReference type="ChEBI" id="CHEBI:29105"/>
        <label>2</label>
    </ligand>
</feature>
<feature type="binding site" evidence="3">
    <location>
        <position position="167"/>
    </location>
    <ligand>
        <name>Zn(2+)</name>
        <dbReference type="ChEBI" id="CHEBI:29105"/>
        <label>2</label>
    </ligand>
</feature>
<feature type="binding site" evidence="3">
    <location>
        <position position="172"/>
    </location>
    <ligand>
        <name>Zn(2+)</name>
        <dbReference type="ChEBI" id="CHEBI:29105"/>
        <label>1</label>
    </ligand>
</feature>
<keyword id="KW-0963">Cytoplasm</keyword>
<keyword id="KW-0238">DNA-binding</keyword>
<keyword id="KW-0479">Metal-binding</keyword>
<keyword id="KW-1185">Reference proteome</keyword>
<keyword id="KW-0879">Wnt signaling pathway</keyword>
<keyword id="KW-0862">Zinc</keyword>
<keyword id="KW-0863">Zinc-finger</keyword>
<sequence>MHHRNDSQRLGKAGCPPEPSLQMANTNFLSTLSPEHCRPLAGECMNKLKCGAAEAEIMNLPERVGTFSAIPALGGISLPPGVIVMTALHSPAAASAAVTDSAFQIANLADCPQNHSSSSSSSSGGAGGANPAKKKRKRCGVCVPCKRLINCGVCSSCRNRKTGHQICKFRKCEELKKKPGTSLERTPVPSAEAFRWFF</sequence>
<reference key="1">
    <citation type="journal article" date="2004" name="Genome Res.">
        <title>The status, quality, and expansion of the NIH full-length cDNA project: the Mammalian Gene Collection (MGC).</title>
        <authorList>
            <consortium name="The MGC Project Team"/>
        </authorList>
    </citation>
    <scope>NUCLEOTIDE SEQUENCE [LARGE SCALE MRNA]</scope>
    <source>
        <strain>C57BL/6J</strain>
        <tissue>Brain</tissue>
    </source>
</reference>
<reference key="2">
    <citation type="journal article" date="2001" name="Mol. Cell. Biol.">
        <title>Inhibition of the Wnt signaling pathway by Idax, a novel Dvl-binding protein.</title>
        <authorList>
            <person name="Hino S."/>
            <person name="Kishida S."/>
            <person name="Michiue T."/>
            <person name="Fukui A."/>
            <person name="Sakamoto I."/>
            <person name="Takada S."/>
            <person name="Asashima M."/>
            <person name="Kikuchi A."/>
        </authorList>
    </citation>
    <scope>FUNCTION</scope>
    <scope>DEVELOPMENTAL STAGE</scope>
</reference>
<protein>
    <recommendedName>
        <fullName>CXXC-type zinc finger protein 4</fullName>
    </recommendedName>
    <alternativeName>
        <fullName>Inhibition of the Dvl and axin complex protein</fullName>
    </alternativeName>
</protein>
<evidence type="ECO:0000250" key="1">
    <source>
        <dbReference type="UniProtKB" id="Q9EQC9"/>
    </source>
</evidence>
<evidence type="ECO:0000250" key="2">
    <source>
        <dbReference type="UniProtKB" id="Q9H2H0"/>
    </source>
</evidence>
<evidence type="ECO:0000255" key="3">
    <source>
        <dbReference type="PROSITE-ProRule" id="PRU00509"/>
    </source>
</evidence>
<evidence type="ECO:0000256" key="4">
    <source>
        <dbReference type="SAM" id="MobiDB-lite"/>
    </source>
</evidence>
<evidence type="ECO:0000269" key="5">
    <source>
    </source>
</evidence>
<proteinExistence type="evidence at transcript level"/>
<dbReference type="EMBL" id="BC067052">
    <property type="protein sequence ID" value="AAH67052.1"/>
    <property type="molecule type" value="mRNA"/>
</dbReference>
<dbReference type="EMBL" id="BC082332">
    <property type="protein sequence ID" value="AAH82332.1"/>
    <property type="molecule type" value="mRNA"/>
</dbReference>
<dbReference type="SMR" id="Q6NXI8"/>
<dbReference type="FunCoup" id="Q6NXI8">
    <property type="interactions" value="1586"/>
</dbReference>
<dbReference type="STRING" id="10090.ENSMUSP00000138000"/>
<dbReference type="PhosphoSitePlus" id="Q6NXI8"/>
<dbReference type="PaxDb" id="10090-ENSMUSP00000138000"/>
<dbReference type="ProteomicsDB" id="277933"/>
<dbReference type="Antibodypedia" id="45113">
    <property type="antibodies" value="123 antibodies from 18 providers"/>
</dbReference>
<dbReference type="AGR" id="MGI:2442112"/>
<dbReference type="MGI" id="MGI:2442112">
    <property type="gene designation" value="Cxxc4"/>
</dbReference>
<dbReference type="VEuPathDB" id="HostDB:ENSMUSG00000044365"/>
<dbReference type="eggNOG" id="ENOG502QQVJ">
    <property type="taxonomic scope" value="Eukaryota"/>
</dbReference>
<dbReference type="HOGENOM" id="CLU_104023_0_0_1"/>
<dbReference type="InParanoid" id="Q6NXI8"/>
<dbReference type="OMA" id="CVNKLKC"/>
<dbReference type="PhylomeDB" id="Q6NXI8"/>
<dbReference type="TreeFam" id="TF326617"/>
<dbReference type="ChiTaRS" id="Cxxc4">
    <property type="organism name" value="mouse"/>
</dbReference>
<dbReference type="PRO" id="PR:Q6NXI8"/>
<dbReference type="Proteomes" id="UP000000589">
    <property type="component" value="Chromosome 3"/>
</dbReference>
<dbReference type="RNAct" id="Q6NXI8">
    <property type="molecule type" value="protein"/>
</dbReference>
<dbReference type="Bgee" id="ENSMUSG00000044365">
    <property type="expression patterns" value="Expressed in vas deferens and 222 other cell types or tissues"/>
</dbReference>
<dbReference type="ExpressionAtlas" id="Q6NXI8">
    <property type="expression patterns" value="baseline and differential"/>
</dbReference>
<dbReference type="GO" id="GO:0005737">
    <property type="term" value="C:cytoplasm"/>
    <property type="evidence" value="ECO:0000314"/>
    <property type="project" value="MGI"/>
</dbReference>
<dbReference type="GO" id="GO:0031410">
    <property type="term" value="C:cytoplasmic vesicle"/>
    <property type="evidence" value="ECO:0000314"/>
    <property type="project" value="MGI"/>
</dbReference>
<dbReference type="GO" id="GO:0005634">
    <property type="term" value="C:nucleus"/>
    <property type="evidence" value="ECO:0000314"/>
    <property type="project" value="MGI"/>
</dbReference>
<dbReference type="GO" id="GO:0008327">
    <property type="term" value="F:methyl-CpG binding"/>
    <property type="evidence" value="ECO:0000250"/>
    <property type="project" value="UniProtKB"/>
</dbReference>
<dbReference type="GO" id="GO:0008270">
    <property type="term" value="F:zinc ion binding"/>
    <property type="evidence" value="ECO:0000250"/>
    <property type="project" value="UniProtKB"/>
</dbReference>
<dbReference type="GO" id="GO:0016055">
    <property type="term" value="P:Wnt signaling pathway"/>
    <property type="evidence" value="ECO:0000353"/>
    <property type="project" value="MGI"/>
</dbReference>
<dbReference type="InterPro" id="IPR040388">
    <property type="entry name" value="CXXC4/CXXC5"/>
</dbReference>
<dbReference type="InterPro" id="IPR002857">
    <property type="entry name" value="Znf_CXXC"/>
</dbReference>
<dbReference type="PANTHER" id="PTHR13419:SF1">
    <property type="entry name" value="CXXC-TYPE ZINC FINGER PROTEIN 4"/>
    <property type="match status" value="1"/>
</dbReference>
<dbReference type="PANTHER" id="PTHR13419">
    <property type="entry name" value="ZINC FINGER-CONTAINING"/>
    <property type="match status" value="1"/>
</dbReference>
<dbReference type="Pfam" id="PF02008">
    <property type="entry name" value="zf-CXXC"/>
    <property type="match status" value="1"/>
</dbReference>
<dbReference type="PROSITE" id="PS51058">
    <property type="entry name" value="ZF_CXXC"/>
    <property type="match status" value="1"/>
</dbReference>
<accession>Q6NXI8</accession>
<name>CXXC4_MOUSE</name>
<organism>
    <name type="scientific">Mus musculus</name>
    <name type="common">Mouse</name>
    <dbReference type="NCBI Taxonomy" id="10090"/>
    <lineage>
        <taxon>Eukaryota</taxon>
        <taxon>Metazoa</taxon>
        <taxon>Chordata</taxon>
        <taxon>Craniata</taxon>
        <taxon>Vertebrata</taxon>
        <taxon>Euteleostomi</taxon>
        <taxon>Mammalia</taxon>
        <taxon>Eutheria</taxon>
        <taxon>Euarchontoglires</taxon>
        <taxon>Glires</taxon>
        <taxon>Rodentia</taxon>
        <taxon>Myomorpha</taxon>
        <taxon>Muroidea</taxon>
        <taxon>Muridae</taxon>
        <taxon>Murinae</taxon>
        <taxon>Mus</taxon>
        <taxon>Mus</taxon>
    </lineage>
</organism>
<gene>
    <name type="primary">Cxxc4</name>
    <name type="synonym">Idax</name>
</gene>